<sequence length="245" mass="28417">MKIDYLTLFPEMFEGVLNHSILKRAQDKGIINVNTINFRDYSINKHNQVDDYPFGGGQGMVLKPEPVFNAMEDINHNEHTRVILMCPQGRPFTQEIAQELSEAKHIVFICGHYEGYDERIRKHLVTDEISMGDYVLTGGELPAMTMTDAIVRLIPGVLGNQASHQDDSFSDGLLEFPQYTRPREYKNMSVPEVLLSGNHAHIDQWRHEQKLIRTYEKRPDLLEQYPLTEKDREILETYKKKLKND</sequence>
<accession>Q8CQL4</accession>
<organism>
    <name type="scientific">Staphylococcus epidermidis (strain ATCC 12228 / FDA PCI 1200)</name>
    <dbReference type="NCBI Taxonomy" id="176280"/>
    <lineage>
        <taxon>Bacteria</taxon>
        <taxon>Bacillati</taxon>
        <taxon>Bacillota</taxon>
        <taxon>Bacilli</taxon>
        <taxon>Bacillales</taxon>
        <taxon>Staphylococcaceae</taxon>
        <taxon>Staphylococcus</taxon>
    </lineage>
</organism>
<evidence type="ECO:0000255" key="1">
    <source>
        <dbReference type="HAMAP-Rule" id="MF_00605"/>
    </source>
</evidence>
<dbReference type="EC" id="2.1.1.228" evidence="1"/>
<dbReference type="EMBL" id="AE015929">
    <property type="protein sequence ID" value="AAO04512.1"/>
    <property type="molecule type" value="Genomic_DNA"/>
</dbReference>
<dbReference type="RefSeq" id="NP_764470.1">
    <property type="nucleotide sequence ID" value="NC_004461.1"/>
</dbReference>
<dbReference type="RefSeq" id="WP_001829466.1">
    <property type="nucleotide sequence ID" value="NZ_WBME01000001.1"/>
</dbReference>
<dbReference type="SMR" id="Q8CQL4"/>
<dbReference type="GeneID" id="50018947"/>
<dbReference type="KEGG" id="sep:SE_0915"/>
<dbReference type="PATRIC" id="fig|176280.10.peg.888"/>
<dbReference type="eggNOG" id="COG0336">
    <property type="taxonomic scope" value="Bacteria"/>
</dbReference>
<dbReference type="HOGENOM" id="CLU_047363_0_1_9"/>
<dbReference type="OrthoDB" id="9807416at2"/>
<dbReference type="Proteomes" id="UP000001411">
    <property type="component" value="Chromosome"/>
</dbReference>
<dbReference type="GO" id="GO:0005829">
    <property type="term" value="C:cytosol"/>
    <property type="evidence" value="ECO:0007669"/>
    <property type="project" value="TreeGrafter"/>
</dbReference>
<dbReference type="GO" id="GO:0052906">
    <property type="term" value="F:tRNA (guanine(37)-N1)-methyltransferase activity"/>
    <property type="evidence" value="ECO:0007669"/>
    <property type="project" value="UniProtKB-UniRule"/>
</dbReference>
<dbReference type="GO" id="GO:0002939">
    <property type="term" value="P:tRNA N1-guanine methylation"/>
    <property type="evidence" value="ECO:0007669"/>
    <property type="project" value="TreeGrafter"/>
</dbReference>
<dbReference type="CDD" id="cd18080">
    <property type="entry name" value="TrmD-like"/>
    <property type="match status" value="1"/>
</dbReference>
<dbReference type="FunFam" id="1.10.1270.20:FF:000001">
    <property type="entry name" value="tRNA (guanine-N(1)-)-methyltransferase"/>
    <property type="match status" value="1"/>
</dbReference>
<dbReference type="FunFam" id="3.40.1280.10:FF:000001">
    <property type="entry name" value="tRNA (guanine-N(1)-)-methyltransferase"/>
    <property type="match status" value="1"/>
</dbReference>
<dbReference type="Gene3D" id="3.40.1280.10">
    <property type="match status" value="1"/>
</dbReference>
<dbReference type="Gene3D" id="1.10.1270.20">
    <property type="entry name" value="tRNA(m1g37)methyltransferase, domain 2"/>
    <property type="match status" value="1"/>
</dbReference>
<dbReference type="HAMAP" id="MF_00605">
    <property type="entry name" value="TrmD"/>
    <property type="match status" value="1"/>
</dbReference>
<dbReference type="InterPro" id="IPR029028">
    <property type="entry name" value="Alpha/beta_knot_MTases"/>
</dbReference>
<dbReference type="InterPro" id="IPR023148">
    <property type="entry name" value="tRNA_m1G_MeTrfase_C_sf"/>
</dbReference>
<dbReference type="InterPro" id="IPR002649">
    <property type="entry name" value="tRNA_m1G_MeTrfase_TrmD"/>
</dbReference>
<dbReference type="InterPro" id="IPR029026">
    <property type="entry name" value="tRNA_m1G_MTases_N"/>
</dbReference>
<dbReference type="InterPro" id="IPR016009">
    <property type="entry name" value="tRNA_MeTrfase_TRMD/TRM10"/>
</dbReference>
<dbReference type="NCBIfam" id="NF000648">
    <property type="entry name" value="PRK00026.1"/>
    <property type="match status" value="1"/>
</dbReference>
<dbReference type="NCBIfam" id="TIGR00088">
    <property type="entry name" value="trmD"/>
    <property type="match status" value="1"/>
</dbReference>
<dbReference type="PANTHER" id="PTHR46417">
    <property type="entry name" value="TRNA (GUANINE-N(1)-)-METHYLTRANSFERASE"/>
    <property type="match status" value="1"/>
</dbReference>
<dbReference type="PANTHER" id="PTHR46417:SF1">
    <property type="entry name" value="TRNA (GUANINE-N(1)-)-METHYLTRANSFERASE"/>
    <property type="match status" value="1"/>
</dbReference>
<dbReference type="Pfam" id="PF01746">
    <property type="entry name" value="tRNA_m1G_MT"/>
    <property type="match status" value="1"/>
</dbReference>
<dbReference type="PIRSF" id="PIRSF000386">
    <property type="entry name" value="tRNA_mtase"/>
    <property type="match status" value="1"/>
</dbReference>
<dbReference type="SUPFAM" id="SSF75217">
    <property type="entry name" value="alpha/beta knot"/>
    <property type="match status" value="1"/>
</dbReference>
<reference key="1">
    <citation type="journal article" date="2003" name="Mol. Microbiol.">
        <title>Genome-based analysis of virulence genes in a non-biofilm-forming Staphylococcus epidermidis strain (ATCC 12228).</title>
        <authorList>
            <person name="Zhang Y.-Q."/>
            <person name="Ren S.-X."/>
            <person name="Li H.-L."/>
            <person name="Wang Y.-X."/>
            <person name="Fu G."/>
            <person name="Yang J."/>
            <person name="Qin Z.-Q."/>
            <person name="Miao Y.-G."/>
            <person name="Wang W.-Y."/>
            <person name="Chen R.-S."/>
            <person name="Shen Y."/>
            <person name="Chen Z."/>
            <person name="Yuan Z.-H."/>
            <person name="Zhao G.-P."/>
            <person name="Qu D."/>
            <person name="Danchin A."/>
            <person name="Wen Y.-M."/>
        </authorList>
    </citation>
    <scope>NUCLEOTIDE SEQUENCE [LARGE SCALE GENOMIC DNA]</scope>
    <source>
        <strain>ATCC 12228 / FDA PCI 1200</strain>
    </source>
</reference>
<keyword id="KW-0963">Cytoplasm</keyword>
<keyword id="KW-0489">Methyltransferase</keyword>
<keyword id="KW-0949">S-adenosyl-L-methionine</keyword>
<keyword id="KW-0808">Transferase</keyword>
<keyword id="KW-0819">tRNA processing</keyword>
<gene>
    <name evidence="1" type="primary">trmD</name>
    <name type="ordered locus">SE_0915</name>
</gene>
<name>TRMD_STAES</name>
<comment type="function">
    <text evidence="1">Specifically methylates guanosine-37 in various tRNAs.</text>
</comment>
<comment type="catalytic activity">
    <reaction evidence="1">
        <text>guanosine(37) in tRNA + S-adenosyl-L-methionine = N(1)-methylguanosine(37) in tRNA + S-adenosyl-L-homocysteine + H(+)</text>
        <dbReference type="Rhea" id="RHEA:36899"/>
        <dbReference type="Rhea" id="RHEA-COMP:10145"/>
        <dbReference type="Rhea" id="RHEA-COMP:10147"/>
        <dbReference type="ChEBI" id="CHEBI:15378"/>
        <dbReference type="ChEBI" id="CHEBI:57856"/>
        <dbReference type="ChEBI" id="CHEBI:59789"/>
        <dbReference type="ChEBI" id="CHEBI:73542"/>
        <dbReference type="ChEBI" id="CHEBI:74269"/>
        <dbReference type="EC" id="2.1.1.228"/>
    </reaction>
</comment>
<comment type="subunit">
    <text evidence="1">Homodimer.</text>
</comment>
<comment type="subcellular location">
    <subcellularLocation>
        <location evidence="1">Cytoplasm</location>
    </subcellularLocation>
</comment>
<comment type="similarity">
    <text evidence="1">Belongs to the RNA methyltransferase TrmD family.</text>
</comment>
<protein>
    <recommendedName>
        <fullName evidence="1">tRNA (guanine-N(1)-)-methyltransferase</fullName>
        <ecNumber evidence="1">2.1.1.228</ecNumber>
    </recommendedName>
    <alternativeName>
        <fullName evidence="1">M1G-methyltransferase</fullName>
    </alternativeName>
    <alternativeName>
        <fullName evidence="1">tRNA [GM37] methyltransferase</fullName>
    </alternativeName>
</protein>
<feature type="chain" id="PRO_0000060462" description="tRNA (guanine-N(1)-)-methyltransferase">
    <location>
        <begin position="1"/>
        <end position="245"/>
    </location>
</feature>
<feature type="binding site" evidence="1">
    <location>
        <position position="111"/>
    </location>
    <ligand>
        <name>S-adenosyl-L-methionine</name>
        <dbReference type="ChEBI" id="CHEBI:59789"/>
    </ligand>
</feature>
<feature type="binding site" evidence="1">
    <location>
        <begin position="131"/>
        <end position="136"/>
    </location>
    <ligand>
        <name>S-adenosyl-L-methionine</name>
        <dbReference type="ChEBI" id="CHEBI:59789"/>
    </ligand>
</feature>
<proteinExistence type="inferred from homology"/>